<comment type="similarity">
    <text evidence="1">Belongs to the bacterial ribosomal protein bL35 family.</text>
</comment>
<reference key="1">
    <citation type="submission" date="2007-11" db="EMBL/GenBank/DDBJ databases">
        <title>The genome sequence of the hyperthermophilic bacterium Thermotoga neapolitana.</title>
        <authorList>
            <person name="Lim S.K."/>
            <person name="Kim J.S."/>
            <person name="Cha S.H."/>
            <person name="Park B.C."/>
            <person name="Lee D.S."/>
            <person name="Tae H.S."/>
            <person name="Kim S.-J."/>
            <person name="Kim J.J."/>
            <person name="Park K.J."/>
            <person name="Lee S.Y."/>
        </authorList>
    </citation>
    <scope>NUCLEOTIDE SEQUENCE [LARGE SCALE GENOMIC DNA]</scope>
    <source>
        <strain>ATCC 49049 / DSM 4359 / NBRC 107923 / NS-E</strain>
    </source>
</reference>
<keyword id="KW-0687">Ribonucleoprotein</keyword>
<keyword id="KW-0689">Ribosomal protein</keyword>
<feature type="chain" id="PRO_1000194088" description="Large ribosomal subunit protein bL35">
    <location>
        <begin position="1"/>
        <end position="65"/>
    </location>
</feature>
<evidence type="ECO:0000255" key="1">
    <source>
        <dbReference type="HAMAP-Rule" id="MF_00514"/>
    </source>
</evidence>
<evidence type="ECO:0000305" key="2"/>
<accession>B9K7W1</accession>
<dbReference type="EMBL" id="CP000916">
    <property type="protein sequence ID" value="ACM23044.1"/>
    <property type="molecule type" value="Genomic_DNA"/>
</dbReference>
<dbReference type="RefSeq" id="WP_015919361.1">
    <property type="nucleotide sequence ID" value="NC_011978.1"/>
</dbReference>
<dbReference type="SMR" id="B9K7W1"/>
<dbReference type="STRING" id="309803.CTN_0868"/>
<dbReference type="KEGG" id="tna:CTN_0868"/>
<dbReference type="eggNOG" id="COG0291">
    <property type="taxonomic scope" value="Bacteria"/>
</dbReference>
<dbReference type="HOGENOM" id="CLU_169643_4_3_0"/>
<dbReference type="Proteomes" id="UP000000445">
    <property type="component" value="Chromosome"/>
</dbReference>
<dbReference type="GO" id="GO:0022625">
    <property type="term" value="C:cytosolic large ribosomal subunit"/>
    <property type="evidence" value="ECO:0007669"/>
    <property type="project" value="TreeGrafter"/>
</dbReference>
<dbReference type="GO" id="GO:0003735">
    <property type="term" value="F:structural constituent of ribosome"/>
    <property type="evidence" value="ECO:0007669"/>
    <property type="project" value="InterPro"/>
</dbReference>
<dbReference type="GO" id="GO:0006412">
    <property type="term" value="P:translation"/>
    <property type="evidence" value="ECO:0007669"/>
    <property type="project" value="UniProtKB-UniRule"/>
</dbReference>
<dbReference type="FunFam" id="4.10.410.60:FF:000001">
    <property type="entry name" value="50S ribosomal protein L35"/>
    <property type="match status" value="1"/>
</dbReference>
<dbReference type="Gene3D" id="4.10.410.60">
    <property type="match status" value="1"/>
</dbReference>
<dbReference type="HAMAP" id="MF_00514">
    <property type="entry name" value="Ribosomal_bL35"/>
    <property type="match status" value="1"/>
</dbReference>
<dbReference type="InterPro" id="IPR001706">
    <property type="entry name" value="Ribosomal_bL35"/>
</dbReference>
<dbReference type="InterPro" id="IPR021137">
    <property type="entry name" value="Ribosomal_bL35-like"/>
</dbReference>
<dbReference type="InterPro" id="IPR018265">
    <property type="entry name" value="Ribosomal_bL35_CS"/>
</dbReference>
<dbReference type="InterPro" id="IPR037229">
    <property type="entry name" value="Ribosomal_bL35_sf"/>
</dbReference>
<dbReference type="NCBIfam" id="TIGR00001">
    <property type="entry name" value="rpmI_bact"/>
    <property type="match status" value="1"/>
</dbReference>
<dbReference type="PANTHER" id="PTHR33343">
    <property type="entry name" value="54S RIBOSOMAL PROTEIN BL35M"/>
    <property type="match status" value="1"/>
</dbReference>
<dbReference type="PANTHER" id="PTHR33343:SF1">
    <property type="entry name" value="LARGE RIBOSOMAL SUBUNIT PROTEIN BL35M"/>
    <property type="match status" value="1"/>
</dbReference>
<dbReference type="Pfam" id="PF01632">
    <property type="entry name" value="Ribosomal_L35p"/>
    <property type="match status" value="1"/>
</dbReference>
<dbReference type="PRINTS" id="PR00064">
    <property type="entry name" value="RIBOSOMALL35"/>
</dbReference>
<dbReference type="SUPFAM" id="SSF143034">
    <property type="entry name" value="L35p-like"/>
    <property type="match status" value="1"/>
</dbReference>
<dbReference type="PROSITE" id="PS00936">
    <property type="entry name" value="RIBOSOMAL_L35"/>
    <property type="match status" value="1"/>
</dbReference>
<organism>
    <name type="scientific">Thermotoga neapolitana (strain ATCC 49049 / DSM 4359 / NBRC 107923 / NS-E)</name>
    <dbReference type="NCBI Taxonomy" id="309803"/>
    <lineage>
        <taxon>Bacteria</taxon>
        <taxon>Thermotogati</taxon>
        <taxon>Thermotogota</taxon>
        <taxon>Thermotogae</taxon>
        <taxon>Thermotogales</taxon>
        <taxon>Thermotogaceae</taxon>
        <taxon>Thermotoga</taxon>
    </lineage>
</organism>
<proteinExistence type="inferred from homology"/>
<name>RL35_THENN</name>
<sequence length="65" mass="7726">MPKMKTNRSAAKRFRVTRKGKIIRNHAYKSHKTRKKRRNVLRALRKKDVVSSADKNRVLRLLGKK</sequence>
<gene>
    <name evidence="1" type="primary">rpmI</name>
    <name type="ordered locus">CTN_0868</name>
</gene>
<protein>
    <recommendedName>
        <fullName evidence="1">Large ribosomal subunit protein bL35</fullName>
    </recommendedName>
    <alternativeName>
        <fullName evidence="2">50S ribosomal protein L35</fullName>
    </alternativeName>
</protein>